<comment type="catalytic activity">
    <reaction evidence="1">
        <text>D-erythro-1-(imidazol-4-yl)glycerol 3-phosphate = 3-(imidazol-4-yl)-2-oxopropyl phosphate + H2O</text>
        <dbReference type="Rhea" id="RHEA:11040"/>
        <dbReference type="ChEBI" id="CHEBI:15377"/>
        <dbReference type="ChEBI" id="CHEBI:57766"/>
        <dbReference type="ChEBI" id="CHEBI:58278"/>
        <dbReference type="EC" id="4.2.1.19"/>
    </reaction>
</comment>
<comment type="pathway">
    <text evidence="1">Amino-acid biosynthesis; L-histidine biosynthesis; L-histidine from 5-phospho-alpha-D-ribose 1-diphosphate: step 6/9.</text>
</comment>
<comment type="subcellular location">
    <subcellularLocation>
        <location evidence="1">Cytoplasm</location>
    </subcellularLocation>
</comment>
<comment type="similarity">
    <text evidence="1">Belongs to the imidazoleglycerol-phosphate dehydratase family.</text>
</comment>
<dbReference type="EC" id="4.2.1.19" evidence="1"/>
<dbReference type="EMBL" id="CP000926">
    <property type="protein sequence ID" value="ABY96227.1"/>
    <property type="molecule type" value="Genomic_DNA"/>
</dbReference>
<dbReference type="RefSeq" id="WP_012270091.1">
    <property type="nucleotide sequence ID" value="NC_010322.1"/>
</dbReference>
<dbReference type="SMR" id="B0KI41"/>
<dbReference type="KEGG" id="ppg:PputGB1_0314"/>
<dbReference type="eggNOG" id="COG0131">
    <property type="taxonomic scope" value="Bacteria"/>
</dbReference>
<dbReference type="HOGENOM" id="CLU_044308_3_0_6"/>
<dbReference type="UniPathway" id="UPA00031">
    <property type="reaction ID" value="UER00011"/>
</dbReference>
<dbReference type="Proteomes" id="UP000002157">
    <property type="component" value="Chromosome"/>
</dbReference>
<dbReference type="GO" id="GO:0005737">
    <property type="term" value="C:cytoplasm"/>
    <property type="evidence" value="ECO:0007669"/>
    <property type="project" value="UniProtKB-SubCell"/>
</dbReference>
<dbReference type="GO" id="GO:0004424">
    <property type="term" value="F:imidazoleglycerol-phosphate dehydratase activity"/>
    <property type="evidence" value="ECO:0007669"/>
    <property type="project" value="UniProtKB-UniRule"/>
</dbReference>
<dbReference type="GO" id="GO:0000105">
    <property type="term" value="P:L-histidine biosynthetic process"/>
    <property type="evidence" value="ECO:0007669"/>
    <property type="project" value="UniProtKB-UniRule"/>
</dbReference>
<dbReference type="CDD" id="cd07914">
    <property type="entry name" value="IGPD"/>
    <property type="match status" value="1"/>
</dbReference>
<dbReference type="FunFam" id="3.30.230.40:FF:000002">
    <property type="entry name" value="Imidazoleglycerol-phosphate dehydratase"/>
    <property type="match status" value="1"/>
</dbReference>
<dbReference type="FunFam" id="3.30.230.40:FF:000003">
    <property type="entry name" value="Imidazoleglycerol-phosphate dehydratase HisB"/>
    <property type="match status" value="1"/>
</dbReference>
<dbReference type="Gene3D" id="3.30.230.40">
    <property type="entry name" value="Imidazole glycerol phosphate dehydratase, domain 1"/>
    <property type="match status" value="2"/>
</dbReference>
<dbReference type="HAMAP" id="MF_00076">
    <property type="entry name" value="HisB"/>
    <property type="match status" value="1"/>
</dbReference>
<dbReference type="InterPro" id="IPR038494">
    <property type="entry name" value="IGPD_sf"/>
</dbReference>
<dbReference type="InterPro" id="IPR000807">
    <property type="entry name" value="ImidazoleglycerolP_deHydtase"/>
</dbReference>
<dbReference type="InterPro" id="IPR020565">
    <property type="entry name" value="ImidazoleglycerP_deHydtase_CS"/>
</dbReference>
<dbReference type="InterPro" id="IPR020568">
    <property type="entry name" value="Ribosomal_Su5_D2-typ_SF"/>
</dbReference>
<dbReference type="NCBIfam" id="NF002106">
    <property type="entry name" value="PRK00951.1-1"/>
    <property type="match status" value="1"/>
</dbReference>
<dbReference type="NCBIfam" id="NF002111">
    <property type="entry name" value="PRK00951.2-1"/>
    <property type="match status" value="1"/>
</dbReference>
<dbReference type="NCBIfam" id="NF002114">
    <property type="entry name" value="PRK00951.2-4"/>
    <property type="match status" value="1"/>
</dbReference>
<dbReference type="PANTHER" id="PTHR23133:SF2">
    <property type="entry name" value="IMIDAZOLEGLYCEROL-PHOSPHATE DEHYDRATASE"/>
    <property type="match status" value="1"/>
</dbReference>
<dbReference type="PANTHER" id="PTHR23133">
    <property type="entry name" value="IMIDAZOLEGLYCEROL-PHOSPHATE DEHYDRATASE HIS7"/>
    <property type="match status" value="1"/>
</dbReference>
<dbReference type="Pfam" id="PF00475">
    <property type="entry name" value="IGPD"/>
    <property type="match status" value="1"/>
</dbReference>
<dbReference type="SUPFAM" id="SSF54211">
    <property type="entry name" value="Ribosomal protein S5 domain 2-like"/>
    <property type="match status" value="2"/>
</dbReference>
<dbReference type="PROSITE" id="PS00954">
    <property type="entry name" value="IGP_DEHYDRATASE_1"/>
    <property type="match status" value="1"/>
</dbReference>
<dbReference type="PROSITE" id="PS00955">
    <property type="entry name" value="IGP_DEHYDRATASE_2"/>
    <property type="match status" value="1"/>
</dbReference>
<proteinExistence type="inferred from homology"/>
<sequence>MVERKASVERNTLETQVKCSINLDGSGKARFDIGVPFLEHMLDQIARHGLIDLDIECKGDTHIDDHHTVEDVGITLGMAFAQAIGDKKGIFRYGHAYVALDEALSRVVIDFSGRPGLQMHVPYTRASVGGFDVDLFQEFFQGFVNHALVTLHIDNLRGHNTHHQIETVFKAFGRALRMAITLDERMAGQMPSTKGCL</sequence>
<reference key="1">
    <citation type="submission" date="2008-01" db="EMBL/GenBank/DDBJ databases">
        <title>Complete sequence of Pseudomonas putida GB-1.</title>
        <authorList>
            <consortium name="US DOE Joint Genome Institute"/>
            <person name="Copeland A."/>
            <person name="Lucas S."/>
            <person name="Lapidus A."/>
            <person name="Barry K."/>
            <person name="Glavina del Rio T."/>
            <person name="Dalin E."/>
            <person name="Tice H."/>
            <person name="Pitluck S."/>
            <person name="Bruce D."/>
            <person name="Goodwin L."/>
            <person name="Chertkov O."/>
            <person name="Brettin T."/>
            <person name="Detter J.C."/>
            <person name="Han C."/>
            <person name="Kuske C.R."/>
            <person name="Schmutz J."/>
            <person name="Larimer F."/>
            <person name="Land M."/>
            <person name="Hauser L."/>
            <person name="Kyrpides N."/>
            <person name="Kim E."/>
            <person name="McCarthy J.K."/>
            <person name="Richardson P."/>
        </authorList>
    </citation>
    <scope>NUCLEOTIDE SEQUENCE [LARGE SCALE GENOMIC DNA]</scope>
    <source>
        <strain>GB-1</strain>
    </source>
</reference>
<protein>
    <recommendedName>
        <fullName evidence="1">Imidazoleglycerol-phosphate dehydratase</fullName>
        <shortName evidence="1">IGPD</shortName>
        <ecNumber evidence="1">4.2.1.19</ecNumber>
    </recommendedName>
</protein>
<keyword id="KW-0028">Amino-acid biosynthesis</keyword>
<keyword id="KW-0963">Cytoplasm</keyword>
<keyword id="KW-0368">Histidine biosynthesis</keyword>
<keyword id="KW-0456">Lyase</keyword>
<evidence type="ECO:0000255" key="1">
    <source>
        <dbReference type="HAMAP-Rule" id="MF_00076"/>
    </source>
</evidence>
<accession>B0KI41</accession>
<organism>
    <name type="scientific">Pseudomonas putida (strain GB-1)</name>
    <dbReference type="NCBI Taxonomy" id="76869"/>
    <lineage>
        <taxon>Bacteria</taxon>
        <taxon>Pseudomonadati</taxon>
        <taxon>Pseudomonadota</taxon>
        <taxon>Gammaproteobacteria</taxon>
        <taxon>Pseudomonadales</taxon>
        <taxon>Pseudomonadaceae</taxon>
        <taxon>Pseudomonas</taxon>
    </lineage>
</organism>
<gene>
    <name evidence="1" type="primary">hisB</name>
    <name type="ordered locus">PputGB1_0314</name>
</gene>
<feature type="chain" id="PRO_1000075252" description="Imidazoleglycerol-phosphate dehydratase">
    <location>
        <begin position="1"/>
        <end position="197"/>
    </location>
</feature>
<name>HIS7_PSEPG</name>